<reference key="1">
    <citation type="submission" date="2006-06" db="EMBL/GenBank/DDBJ databases">
        <title>Complete sequence of Rubrobacter xylanophilus DSM 9941.</title>
        <authorList>
            <consortium name="US DOE Joint Genome Institute"/>
            <person name="Copeland A."/>
            <person name="Lucas S."/>
            <person name="Lapidus A."/>
            <person name="Barry K."/>
            <person name="Detter J.C."/>
            <person name="Glavina del Rio T."/>
            <person name="Hammon N."/>
            <person name="Israni S."/>
            <person name="Dalin E."/>
            <person name="Tice H."/>
            <person name="Pitluck S."/>
            <person name="Munk A.C."/>
            <person name="Brettin T."/>
            <person name="Bruce D."/>
            <person name="Han C."/>
            <person name="Tapia R."/>
            <person name="Gilna P."/>
            <person name="Schmutz J."/>
            <person name="Larimer F."/>
            <person name="Land M."/>
            <person name="Hauser L."/>
            <person name="Kyrpides N."/>
            <person name="Lykidis A."/>
            <person name="da Costa M.S."/>
            <person name="Rainey F.A."/>
            <person name="Empadinhas N."/>
            <person name="Jolivet E."/>
            <person name="Battista J.R."/>
            <person name="Richardson P."/>
        </authorList>
    </citation>
    <scope>NUCLEOTIDE SEQUENCE [LARGE SCALE GENOMIC DNA]</scope>
    <source>
        <strain>DSM 9941 / JCM 11954 / NBRC 16129 / PRD-1</strain>
    </source>
</reference>
<organism>
    <name type="scientific">Rubrobacter xylanophilus (strain DSM 9941 / JCM 11954 / NBRC 16129 / PRD-1)</name>
    <dbReference type="NCBI Taxonomy" id="266117"/>
    <lineage>
        <taxon>Bacteria</taxon>
        <taxon>Bacillati</taxon>
        <taxon>Actinomycetota</taxon>
        <taxon>Rubrobacteria</taxon>
        <taxon>Rubrobacterales</taxon>
        <taxon>Rubrobacteraceae</taxon>
        <taxon>Rubrobacter</taxon>
    </lineage>
</organism>
<sequence>MIRVTVAGAAGRMGREVCRAALEDPEVVLAGGVVEPGSPEVGADLGELCGAGRAGVAASEEPPPEAGVLVEFTTPEATVEHLSYGLPAVIGTTGLSEEQRAKVEEAARGVPIVLAPNMSVGVNLLLGVVRRLSEALGPGYDIEIVEAHHRGKRDAPSGTALLMGRAAASGRGRRLEEVAVYGREGVSPRGEGEIGIHALRGGAVVGEHRVIFYGLGEEVEVVHRALSRRTFAEGALRAARFAAAAQPGLYSMQDVLSSSP</sequence>
<feature type="chain" id="PRO_1000008629" description="4-hydroxy-tetrahydrodipicolinate reductase">
    <location>
        <begin position="1"/>
        <end position="260"/>
    </location>
</feature>
<feature type="active site" description="Proton donor/acceptor" evidence="1">
    <location>
        <position position="148"/>
    </location>
</feature>
<feature type="active site" description="Proton donor" evidence="1">
    <location>
        <position position="152"/>
    </location>
</feature>
<feature type="binding site" evidence="1">
    <location>
        <begin position="8"/>
        <end position="13"/>
    </location>
    <ligand>
        <name>NAD(+)</name>
        <dbReference type="ChEBI" id="CHEBI:57540"/>
    </ligand>
</feature>
<feature type="binding site" evidence="1">
    <location>
        <position position="35"/>
    </location>
    <ligand>
        <name>NAD(+)</name>
        <dbReference type="ChEBI" id="CHEBI:57540"/>
    </ligand>
</feature>
<feature type="binding site" evidence="1">
    <location>
        <begin position="91"/>
        <end position="93"/>
    </location>
    <ligand>
        <name>NAD(+)</name>
        <dbReference type="ChEBI" id="CHEBI:57540"/>
    </ligand>
</feature>
<feature type="binding site" evidence="1">
    <location>
        <begin position="115"/>
        <end position="118"/>
    </location>
    <ligand>
        <name>NAD(+)</name>
        <dbReference type="ChEBI" id="CHEBI:57540"/>
    </ligand>
</feature>
<feature type="binding site" evidence="1">
    <location>
        <position position="149"/>
    </location>
    <ligand>
        <name>(S)-2,3,4,5-tetrahydrodipicolinate</name>
        <dbReference type="ChEBI" id="CHEBI:16845"/>
    </ligand>
</feature>
<feature type="binding site" evidence="1">
    <location>
        <begin position="158"/>
        <end position="159"/>
    </location>
    <ligand>
        <name>(S)-2,3,4,5-tetrahydrodipicolinate</name>
        <dbReference type="ChEBI" id="CHEBI:16845"/>
    </ligand>
</feature>
<keyword id="KW-0028">Amino-acid biosynthesis</keyword>
<keyword id="KW-0963">Cytoplasm</keyword>
<keyword id="KW-0220">Diaminopimelate biosynthesis</keyword>
<keyword id="KW-0457">Lysine biosynthesis</keyword>
<keyword id="KW-0520">NAD</keyword>
<keyword id="KW-0521">NADP</keyword>
<keyword id="KW-0560">Oxidoreductase</keyword>
<keyword id="KW-1185">Reference proteome</keyword>
<name>DAPB_RUBXD</name>
<protein>
    <recommendedName>
        <fullName evidence="1">4-hydroxy-tetrahydrodipicolinate reductase</fullName>
        <shortName evidence="1">HTPA reductase</shortName>
        <ecNumber evidence="1">1.17.1.8</ecNumber>
    </recommendedName>
</protein>
<evidence type="ECO:0000255" key="1">
    <source>
        <dbReference type="HAMAP-Rule" id="MF_00102"/>
    </source>
</evidence>
<evidence type="ECO:0000305" key="2"/>
<accession>Q1AZV2</accession>
<proteinExistence type="inferred from homology"/>
<dbReference type="EC" id="1.17.1.8" evidence="1"/>
<dbReference type="EMBL" id="CP000386">
    <property type="protein sequence ID" value="ABG03076.1"/>
    <property type="molecule type" value="Genomic_DNA"/>
</dbReference>
<dbReference type="RefSeq" id="WP_011563094.1">
    <property type="nucleotide sequence ID" value="NC_008148.1"/>
</dbReference>
<dbReference type="SMR" id="Q1AZV2"/>
<dbReference type="STRING" id="266117.Rxyl_0096"/>
<dbReference type="KEGG" id="rxy:Rxyl_0096"/>
<dbReference type="eggNOG" id="COG0289">
    <property type="taxonomic scope" value="Bacteria"/>
</dbReference>
<dbReference type="HOGENOM" id="CLU_047479_2_1_11"/>
<dbReference type="PhylomeDB" id="Q1AZV2"/>
<dbReference type="UniPathway" id="UPA00034">
    <property type="reaction ID" value="UER00018"/>
</dbReference>
<dbReference type="Proteomes" id="UP000006637">
    <property type="component" value="Chromosome"/>
</dbReference>
<dbReference type="GO" id="GO:0005737">
    <property type="term" value="C:cytoplasm"/>
    <property type="evidence" value="ECO:0007669"/>
    <property type="project" value="UniProtKB-SubCell"/>
</dbReference>
<dbReference type="GO" id="GO:0008839">
    <property type="term" value="F:4-hydroxy-tetrahydrodipicolinate reductase"/>
    <property type="evidence" value="ECO:0007669"/>
    <property type="project" value="UniProtKB-EC"/>
</dbReference>
<dbReference type="GO" id="GO:0051287">
    <property type="term" value="F:NAD binding"/>
    <property type="evidence" value="ECO:0007669"/>
    <property type="project" value="UniProtKB-UniRule"/>
</dbReference>
<dbReference type="GO" id="GO:0050661">
    <property type="term" value="F:NADP binding"/>
    <property type="evidence" value="ECO:0007669"/>
    <property type="project" value="UniProtKB-UniRule"/>
</dbReference>
<dbReference type="GO" id="GO:0016726">
    <property type="term" value="F:oxidoreductase activity, acting on CH or CH2 groups, NAD or NADP as acceptor"/>
    <property type="evidence" value="ECO:0007669"/>
    <property type="project" value="UniProtKB-UniRule"/>
</dbReference>
<dbReference type="GO" id="GO:0019877">
    <property type="term" value="P:diaminopimelate biosynthetic process"/>
    <property type="evidence" value="ECO:0007669"/>
    <property type="project" value="UniProtKB-UniRule"/>
</dbReference>
<dbReference type="GO" id="GO:0009089">
    <property type="term" value="P:lysine biosynthetic process via diaminopimelate"/>
    <property type="evidence" value="ECO:0007669"/>
    <property type="project" value="UniProtKB-UniRule"/>
</dbReference>
<dbReference type="CDD" id="cd02274">
    <property type="entry name" value="DHDPR_N"/>
    <property type="match status" value="1"/>
</dbReference>
<dbReference type="FunFam" id="3.30.360.10:FF:000004">
    <property type="entry name" value="4-hydroxy-tetrahydrodipicolinate reductase"/>
    <property type="match status" value="1"/>
</dbReference>
<dbReference type="Gene3D" id="3.30.360.10">
    <property type="entry name" value="Dihydrodipicolinate Reductase, domain 2"/>
    <property type="match status" value="1"/>
</dbReference>
<dbReference type="Gene3D" id="3.40.50.720">
    <property type="entry name" value="NAD(P)-binding Rossmann-like Domain"/>
    <property type="match status" value="1"/>
</dbReference>
<dbReference type="HAMAP" id="MF_00102">
    <property type="entry name" value="DapB"/>
    <property type="match status" value="1"/>
</dbReference>
<dbReference type="InterPro" id="IPR022663">
    <property type="entry name" value="DapB_C"/>
</dbReference>
<dbReference type="InterPro" id="IPR000846">
    <property type="entry name" value="DapB_N"/>
</dbReference>
<dbReference type="InterPro" id="IPR022664">
    <property type="entry name" value="DapB_N_CS"/>
</dbReference>
<dbReference type="InterPro" id="IPR023940">
    <property type="entry name" value="DHDPR_bac"/>
</dbReference>
<dbReference type="InterPro" id="IPR036291">
    <property type="entry name" value="NAD(P)-bd_dom_sf"/>
</dbReference>
<dbReference type="NCBIfam" id="TIGR00036">
    <property type="entry name" value="dapB"/>
    <property type="match status" value="1"/>
</dbReference>
<dbReference type="PANTHER" id="PTHR20836:SF0">
    <property type="entry name" value="4-HYDROXY-TETRAHYDRODIPICOLINATE REDUCTASE 1, CHLOROPLASTIC-RELATED"/>
    <property type="match status" value="1"/>
</dbReference>
<dbReference type="PANTHER" id="PTHR20836">
    <property type="entry name" value="DIHYDRODIPICOLINATE REDUCTASE"/>
    <property type="match status" value="1"/>
</dbReference>
<dbReference type="Pfam" id="PF05173">
    <property type="entry name" value="DapB_C"/>
    <property type="match status" value="1"/>
</dbReference>
<dbReference type="Pfam" id="PF01113">
    <property type="entry name" value="DapB_N"/>
    <property type="match status" value="1"/>
</dbReference>
<dbReference type="PIRSF" id="PIRSF000161">
    <property type="entry name" value="DHPR"/>
    <property type="match status" value="1"/>
</dbReference>
<dbReference type="SUPFAM" id="SSF55347">
    <property type="entry name" value="Glyceraldehyde-3-phosphate dehydrogenase-like, C-terminal domain"/>
    <property type="match status" value="1"/>
</dbReference>
<dbReference type="SUPFAM" id="SSF51735">
    <property type="entry name" value="NAD(P)-binding Rossmann-fold domains"/>
    <property type="match status" value="1"/>
</dbReference>
<dbReference type="PROSITE" id="PS01298">
    <property type="entry name" value="DAPB"/>
    <property type="match status" value="1"/>
</dbReference>
<comment type="function">
    <text evidence="1">Catalyzes the conversion of 4-hydroxy-tetrahydrodipicolinate (HTPA) to tetrahydrodipicolinate.</text>
</comment>
<comment type="catalytic activity">
    <reaction evidence="1">
        <text>(S)-2,3,4,5-tetrahydrodipicolinate + NAD(+) + H2O = (2S,4S)-4-hydroxy-2,3,4,5-tetrahydrodipicolinate + NADH + H(+)</text>
        <dbReference type="Rhea" id="RHEA:35323"/>
        <dbReference type="ChEBI" id="CHEBI:15377"/>
        <dbReference type="ChEBI" id="CHEBI:15378"/>
        <dbReference type="ChEBI" id="CHEBI:16845"/>
        <dbReference type="ChEBI" id="CHEBI:57540"/>
        <dbReference type="ChEBI" id="CHEBI:57945"/>
        <dbReference type="ChEBI" id="CHEBI:67139"/>
        <dbReference type="EC" id="1.17.1.8"/>
    </reaction>
</comment>
<comment type="catalytic activity">
    <reaction evidence="1">
        <text>(S)-2,3,4,5-tetrahydrodipicolinate + NADP(+) + H2O = (2S,4S)-4-hydroxy-2,3,4,5-tetrahydrodipicolinate + NADPH + H(+)</text>
        <dbReference type="Rhea" id="RHEA:35331"/>
        <dbReference type="ChEBI" id="CHEBI:15377"/>
        <dbReference type="ChEBI" id="CHEBI:15378"/>
        <dbReference type="ChEBI" id="CHEBI:16845"/>
        <dbReference type="ChEBI" id="CHEBI:57783"/>
        <dbReference type="ChEBI" id="CHEBI:58349"/>
        <dbReference type="ChEBI" id="CHEBI:67139"/>
        <dbReference type="EC" id="1.17.1.8"/>
    </reaction>
</comment>
<comment type="pathway">
    <text evidence="1">Amino-acid biosynthesis; L-lysine biosynthesis via DAP pathway; (S)-tetrahydrodipicolinate from L-aspartate: step 4/4.</text>
</comment>
<comment type="subcellular location">
    <subcellularLocation>
        <location evidence="1">Cytoplasm</location>
    </subcellularLocation>
</comment>
<comment type="similarity">
    <text evidence="1">Belongs to the DapB family.</text>
</comment>
<comment type="caution">
    <text evidence="2">Was originally thought to be a dihydrodipicolinate reductase (DHDPR), catalyzing the conversion of dihydrodipicolinate to tetrahydrodipicolinate. However, it was shown in E.coli that the substrate of the enzymatic reaction is not dihydrodipicolinate (DHDP) but in fact (2S,4S)-4-hydroxy-2,3,4,5-tetrahydrodipicolinic acid (HTPA), the product released by the DapA-catalyzed reaction.</text>
</comment>
<gene>
    <name evidence="1" type="primary">dapB</name>
    <name type="ordered locus">Rxyl_0096</name>
</gene>